<keyword id="KW-0975">Bacterial flagellum</keyword>
<keyword id="KW-0574">Periplasm</keyword>
<keyword id="KW-1185">Reference proteome</keyword>
<keyword id="KW-0732">Signal</keyword>
<sequence length="331" mass="35421">MKKRLAVLLVIVLTITFSFSVTTRIKDIAFFRGARDNQLFGIGLVVGLNGTGDSGNVNSPLLLEMMKKFGVQVSENDLKSKNTALVMVLADIPPFAKEGMRIDCVVASIADAKSLAGGYLLQTPLYGADGKVYAVAQGSVIIGGEDVKLSSNLQKRYRVVGYLLEGAIVERDIPSDMLDGDSVTILLRQPDITTAARVARAINEKFEMDLAKAIDPSAIKLTVPSAFQDDLITFLSLVEEIEVQPDVPARIVVNERTGTVLFGGDVKLSDFVISYGNFTISVTGGKIGDKDATISNLVSALKAAGATPQDIIAILQVIYESGYITGELIIM</sequence>
<feature type="signal peptide" evidence="2">
    <location>
        <begin position="1"/>
        <end position="23"/>
    </location>
</feature>
<feature type="chain" id="PRO_0000009525" description="Flagellar P-ring protein">
    <location>
        <begin position="24"/>
        <end position="331"/>
    </location>
</feature>
<gene>
    <name type="primary">flgI</name>
    <name type="ordered locus">TM_1539</name>
</gene>
<evidence type="ECO:0000250" key="1"/>
<evidence type="ECO:0000255" key="2"/>
<evidence type="ECO:0000305" key="3"/>
<accession>Q9X1M5</accession>
<proteinExistence type="inferred from homology"/>
<protein>
    <recommendedName>
        <fullName>Flagellar P-ring protein</fullName>
    </recommendedName>
    <alternativeName>
        <fullName>Basal body P-ring protein</fullName>
    </alternativeName>
</protein>
<comment type="function">
    <text evidence="1">Assembles around the rod to form the L-ring and probably protects the motor/basal body from shearing forces during rotation.</text>
</comment>
<comment type="subunit">
    <text evidence="1">The basal body constitutes a major portion of the flagellar organelle and consists of four rings (L,P,S, and M) mounted on a central rod.</text>
</comment>
<comment type="subcellular location">
    <subcellularLocation>
        <location evidence="1">Periplasm</location>
    </subcellularLocation>
    <subcellularLocation>
        <location evidence="1">Bacterial flagellum basal body</location>
    </subcellularLocation>
</comment>
<comment type="sequence caution" evidence="3">
    <conflict type="erroneous initiation">
        <sequence resource="EMBL-CDS" id="AAD36606"/>
    </conflict>
</comment>
<reference key="1">
    <citation type="journal article" date="1999" name="Nature">
        <title>Evidence for lateral gene transfer between Archaea and Bacteria from genome sequence of Thermotoga maritima.</title>
        <authorList>
            <person name="Nelson K.E."/>
            <person name="Clayton R.A."/>
            <person name="Gill S.R."/>
            <person name="Gwinn M.L."/>
            <person name="Dodson R.J."/>
            <person name="Haft D.H."/>
            <person name="Hickey E.K."/>
            <person name="Peterson J.D."/>
            <person name="Nelson W.C."/>
            <person name="Ketchum K.A."/>
            <person name="McDonald L.A."/>
            <person name="Utterback T.R."/>
            <person name="Malek J.A."/>
            <person name="Linher K.D."/>
            <person name="Garrett M.M."/>
            <person name="Stewart A.M."/>
            <person name="Cotton M.D."/>
            <person name="Pratt M.S."/>
            <person name="Phillips C.A."/>
            <person name="Richardson D.L."/>
            <person name="Heidelberg J.F."/>
            <person name="Sutton G.G."/>
            <person name="Fleischmann R.D."/>
            <person name="Eisen J.A."/>
            <person name="White O."/>
            <person name="Salzberg S.L."/>
            <person name="Smith H.O."/>
            <person name="Venter J.C."/>
            <person name="Fraser C.M."/>
        </authorList>
    </citation>
    <scope>NUCLEOTIDE SEQUENCE [LARGE SCALE GENOMIC DNA]</scope>
    <source>
        <strain>ATCC 43589 / DSM 3109 / JCM 10099 / NBRC 100826 / MSB8</strain>
    </source>
</reference>
<name>FLGI_THEMA</name>
<dbReference type="EMBL" id="AE000512">
    <property type="protein sequence ID" value="AAD36606.1"/>
    <property type="status" value="ALT_INIT"/>
    <property type="molecule type" value="Genomic_DNA"/>
</dbReference>
<dbReference type="PIR" id="G72242">
    <property type="entry name" value="G72242"/>
</dbReference>
<dbReference type="RefSeq" id="NP_229339.1">
    <property type="nucleotide sequence ID" value="NC_000853.1"/>
</dbReference>
<dbReference type="RefSeq" id="WP_004081923.1">
    <property type="nucleotide sequence ID" value="NC_000853.1"/>
</dbReference>
<dbReference type="SMR" id="Q9X1M5"/>
<dbReference type="STRING" id="243274.TM_1539"/>
<dbReference type="PaxDb" id="243274-THEMA_06590"/>
<dbReference type="EnsemblBacteria" id="AAD36606">
    <property type="protein sequence ID" value="AAD36606"/>
    <property type="gene ID" value="TM_1539"/>
</dbReference>
<dbReference type="KEGG" id="tma:TM1539"/>
<dbReference type="KEGG" id="tmi:THEMA_06590"/>
<dbReference type="KEGG" id="tmm:Tmari_1547"/>
<dbReference type="KEGG" id="tmw:THMA_1573"/>
<dbReference type="PATRIC" id="fig|243274.5.peg.1557"/>
<dbReference type="eggNOG" id="COG1706">
    <property type="taxonomic scope" value="Bacteria"/>
</dbReference>
<dbReference type="InParanoid" id="Q9X1M5"/>
<dbReference type="OrthoDB" id="9786431at2"/>
<dbReference type="Proteomes" id="UP000008183">
    <property type="component" value="Chromosome"/>
</dbReference>
<dbReference type="GO" id="GO:0009428">
    <property type="term" value="C:bacterial-type flagellum basal body, distal rod, P ring"/>
    <property type="evidence" value="ECO:0000318"/>
    <property type="project" value="GO_Central"/>
</dbReference>
<dbReference type="GO" id="GO:0030288">
    <property type="term" value="C:outer membrane-bounded periplasmic space"/>
    <property type="evidence" value="ECO:0007669"/>
    <property type="project" value="InterPro"/>
</dbReference>
<dbReference type="GO" id="GO:0005198">
    <property type="term" value="F:structural molecule activity"/>
    <property type="evidence" value="ECO:0007669"/>
    <property type="project" value="InterPro"/>
</dbReference>
<dbReference type="GO" id="GO:0071973">
    <property type="term" value="P:bacterial-type flagellum-dependent cell motility"/>
    <property type="evidence" value="ECO:0000318"/>
    <property type="project" value="GO_Central"/>
</dbReference>
<dbReference type="HAMAP" id="MF_00416">
    <property type="entry name" value="FlgI"/>
    <property type="match status" value="1"/>
</dbReference>
<dbReference type="InterPro" id="IPR001782">
    <property type="entry name" value="Flag_FlgI"/>
</dbReference>
<dbReference type="NCBIfam" id="NF003676">
    <property type="entry name" value="PRK05303.1"/>
    <property type="match status" value="1"/>
</dbReference>
<dbReference type="PANTHER" id="PTHR30381">
    <property type="entry name" value="FLAGELLAR P-RING PERIPLASMIC PROTEIN FLGI"/>
    <property type="match status" value="1"/>
</dbReference>
<dbReference type="PANTHER" id="PTHR30381:SF0">
    <property type="entry name" value="FLAGELLAR P-RING PROTEIN"/>
    <property type="match status" value="1"/>
</dbReference>
<dbReference type="Pfam" id="PF02119">
    <property type="entry name" value="FlgI"/>
    <property type="match status" value="2"/>
</dbReference>
<dbReference type="PRINTS" id="PR01010">
    <property type="entry name" value="FLGPRINGFLGI"/>
</dbReference>
<organism>
    <name type="scientific">Thermotoga maritima (strain ATCC 43589 / DSM 3109 / JCM 10099 / NBRC 100826 / MSB8)</name>
    <dbReference type="NCBI Taxonomy" id="243274"/>
    <lineage>
        <taxon>Bacteria</taxon>
        <taxon>Thermotogati</taxon>
        <taxon>Thermotogota</taxon>
        <taxon>Thermotogae</taxon>
        <taxon>Thermotogales</taxon>
        <taxon>Thermotogaceae</taxon>
        <taxon>Thermotoga</taxon>
    </lineage>
</organism>